<organism>
    <name type="scientific">Tolumonas auensis (strain DSM 9187 / NBRC 110442 / TA 4)</name>
    <dbReference type="NCBI Taxonomy" id="595494"/>
    <lineage>
        <taxon>Bacteria</taxon>
        <taxon>Pseudomonadati</taxon>
        <taxon>Pseudomonadota</taxon>
        <taxon>Gammaproteobacteria</taxon>
        <taxon>Aeromonadales</taxon>
        <taxon>Aeromonadaceae</taxon>
        <taxon>Tolumonas</taxon>
    </lineage>
</organism>
<gene>
    <name evidence="1" type="primary">ubiB</name>
    <name type="ordered locus">Tola_0331</name>
</gene>
<reference key="1">
    <citation type="submission" date="2009-05" db="EMBL/GenBank/DDBJ databases">
        <title>Complete sequence of Tolumonas auensis DSM 9187.</title>
        <authorList>
            <consortium name="US DOE Joint Genome Institute"/>
            <person name="Lucas S."/>
            <person name="Copeland A."/>
            <person name="Lapidus A."/>
            <person name="Glavina del Rio T."/>
            <person name="Tice H."/>
            <person name="Bruce D."/>
            <person name="Goodwin L."/>
            <person name="Pitluck S."/>
            <person name="Chertkov O."/>
            <person name="Brettin T."/>
            <person name="Detter J.C."/>
            <person name="Han C."/>
            <person name="Larimer F."/>
            <person name="Land M."/>
            <person name="Hauser L."/>
            <person name="Kyrpides N."/>
            <person name="Mikhailova N."/>
            <person name="Spring S."/>
            <person name="Beller H."/>
        </authorList>
    </citation>
    <scope>NUCLEOTIDE SEQUENCE [LARGE SCALE GENOMIC DNA]</scope>
    <source>
        <strain>DSM 9187 / NBRC 110442 / TA 4</strain>
    </source>
</reference>
<evidence type="ECO:0000255" key="1">
    <source>
        <dbReference type="HAMAP-Rule" id="MF_00414"/>
    </source>
</evidence>
<keyword id="KW-0067">ATP-binding</keyword>
<keyword id="KW-0997">Cell inner membrane</keyword>
<keyword id="KW-1003">Cell membrane</keyword>
<keyword id="KW-0418">Kinase</keyword>
<keyword id="KW-0472">Membrane</keyword>
<keyword id="KW-0547">Nucleotide-binding</keyword>
<keyword id="KW-1185">Reference proteome</keyword>
<keyword id="KW-0808">Transferase</keyword>
<keyword id="KW-0812">Transmembrane</keyword>
<keyword id="KW-1133">Transmembrane helix</keyword>
<keyword id="KW-0831">Ubiquinone biosynthesis</keyword>
<sequence length="543" mass="63191">MILREWRRFYTIGSVLLRHGLDELIPRHWQPWPVRLFRRSLFWLRNRYPEQSRGARLRHAFEGLGPVFIKFGQMLSTRRDLLPPDLAEELAMLQDRVPSFDGQLAREQIEQALGQPIEALFADFDQQPLASASVAQVHTARLKENNAEIVIKVIRPDIKPVINDDIRLMRLCAKIVAFLIPNNRLRPVEVIEEYRRTLLDELNLMSEAANAIQLRRNFENSSHLYVPLVYSDYCRESVLVMERIYGIPVSDRAALEANGTDLKLLAERGVEVFFTQVFRDSFFHADMHPGNVFVSYEHPHDPQWIGIDCGIVGTLNRQDKRYLAENFLAFFNRDYRKVAELHVQSGWVPPDTKVEEFESALRTVLEPIFAKPLAEISFGQVLLNLFNTARRFNMHVQPQLVLLQKTLLYIEGLGRHLYPQLDLWQTAKPFLEHWMRQQIGPKAAWRAIKEKAPFWAEKLPDMPDLIYDTLTQVQHQQHMVKGLYQQYHQQHRRHAQARFLLGAGATLLLGSILLLPTHEQLASAGLTISIICWLNGWWKISRR</sequence>
<name>UBIB_TOLAT</name>
<proteinExistence type="inferred from homology"/>
<feature type="chain" id="PRO_1000206017" description="Probable protein kinase UbiB">
    <location>
        <begin position="1"/>
        <end position="543"/>
    </location>
</feature>
<feature type="transmembrane region" description="Helical" evidence="1">
    <location>
        <begin position="499"/>
        <end position="519"/>
    </location>
</feature>
<feature type="transmembrane region" description="Helical" evidence="1">
    <location>
        <begin position="521"/>
        <end position="541"/>
    </location>
</feature>
<feature type="domain" description="Protein kinase" evidence="1">
    <location>
        <begin position="123"/>
        <end position="500"/>
    </location>
</feature>
<feature type="active site" description="Proton acceptor" evidence="1">
    <location>
        <position position="286"/>
    </location>
</feature>
<feature type="binding site" evidence="1">
    <location>
        <begin position="129"/>
        <end position="137"/>
    </location>
    <ligand>
        <name>ATP</name>
        <dbReference type="ChEBI" id="CHEBI:30616"/>
    </ligand>
</feature>
<feature type="binding site" evidence="1">
    <location>
        <position position="152"/>
    </location>
    <ligand>
        <name>ATP</name>
        <dbReference type="ChEBI" id="CHEBI:30616"/>
    </ligand>
</feature>
<comment type="function">
    <text evidence="1">Is probably a protein kinase regulator of UbiI activity which is involved in aerobic coenzyme Q (ubiquinone) biosynthesis.</text>
</comment>
<comment type="pathway">
    <text>Cofactor biosynthesis; ubiquinone biosynthesis [regulation].</text>
</comment>
<comment type="subcellular location">
    <subcellularLocation>
        <location evidence="1">Cell inner membrane</location>
        <topology evidence="1">Multi-pass membrane protein</topology>
    </subcellularLocation>
</comment>
<comment type="similarity">
    <text evidence="1">Belongs to the ABC1 family. UbiB subfamily.</text>
</comment>
<accession>C4L962</accession>
<dbReference type="EC" id="2.7.-.-" evidence="1"/>
<dbReference type="EMBL" id="CP001616">
    <property type="protein sequence ID" value="ACQ91961.1"/>
    <property type="molecule type" value="Genomic_DNA"/>
</dbReference>
<dbReference type="RefSeq" id="WP_012728560.1">
    <property type="nucleotide sequence ID" value="NC_012691.1"/>
</dbReference>
<dbReference type="SMR" id="C4L962"/>
<dbReference type="STRING" id="595494.Tola_0331"/>
<dbReference type="KEGG" id="tau:Tola_0331"/>
<dbReference type="eggNOG" id="COG0661">
    <property type="taxonomic scope" value="Bacteria"/>
</dbReference>
<dbReference type="HOGENOM" id="CLU_006533_0_0_6"/>
<dbReference type="OrthoDB" id="9795390at2"/>
<dbReference type="UniPathway" id="UPA00232"/>
<dbReference type="Proteomes" id="UP000009073">
    <property type="component" value="Chromosome"/>
</dbReference>
<dbReference type="GO" id="GO:0005886">
    <property type="term" value="C:plasma membrane"/>
    <property type="evidence" value="ECO:0007669"/>
    <property type="project" value="UniProtKB-SubCell"/>
</dbReference>
<dbReference type="GO" id="GO:0005524">
    <property type="term" value="F:ATP binding"/>
    <property type="evidence" value="ECO:0007669"/>
    <property type="project" value="UniProtKB-KW"/>
</dbReference>
<dbReference type="GO" id="GO:0004672">
    <property type="term" value="F:protein kinase activity"/>
    <property type="evidence" value="ECO:0007669"/>
    <property type="project" value="UniProtKB-UniRule"/>
</dbReference>
<dbReference type="GO" id="GO:0010795">
    <property type="term" value="P:regulation of ubiquinone biosynthetic process"/>
    <property type="evidence" value="ECO:0007669"/>
    <property type="project" value="UniProtKB-UniRule"/>
</dbReference>
<dbReference type="GO" id="GO:0006744">
    <property type="term" value="P:ubiquinone biosynthetic process"/>
    <property type="evidence" value="ECO:0007669"/>
    <property type="project" value="UniProtKB-UniPathway"/>
</dbReference>
<dbReference type="CDD" id="cd13972">
    <property type="entry name" value="UbiB"/>
    <property type="match status" value="1"/>
</dbReference>
<dbReference type="HAMAP" id="MF_00414">
    <property type="entry name" value="UbiB"/>
    <property type="match status" value="1"/>
</dbReference>
<dbReference type="InterPro" id="IPR004147">
    <property type="entry name" value="ABC1_dom"/>
</dbReference>
<dbReference type="InterPro" id="IPR011009">
    <property type="entry name" value="Kinase-like_dom_sf"/>
</dbReference>
<dbReference type="InterPro" id="IPR010232">
    <property type="entry name" value="UbiB"/>
</dbReference>
<dbReference type="InterPro" id="IPR045308">
    <property type="entry name" value="UbiB_bact"/>
</dbReference>
<dbReference type="InterPro" id="IPR050154">
    <property type="entry name" value="UbiB_kinase"/>
</dbReference>
<dbReference type="NCBIfam" id="NF003404">
    <property type="entry name" value="PRK04750.1"/>
    <property type="match status" value="1"/>
</dbReference>
<dbReference type="NCBIfam" id="TIGR01982">
    <property type="entry name" value="UbiB"/>
    <property type="match status" value="1"/>
</dbReference>
<dbReference type="PANTHER" id="PTHR10566">
    <property type="entry name" value="CHAPERONE-ACTIVITY OF BC1 COMPLEX CABC1 -RELATED"/>
    <property type="match status" value="1"/>
</dbReference>
<dbReference type="PANTHER" id="PTHR10566:SF113">
    <property type="entry name" value="PROTEIN ACTIVITY OF BC1 COMPLEX KINASE 7, CHLOROPLASTIC"/>
    <property type="match status" value="1"/>
</dbReference>
<dbReference type="Pfam" id="PF03109">
    <property type="entry name" value="ABC1"/>
    <property type="match status" value="1"/>
</dbReference>
<dbReference type="SUPFAM" id="SSF56112">
    <property type="entry name" value="Protein kinase-like (PK-like)"/>
    <property type="match status" value="1"/>
</dbReference>
<protein>
    <recommendedName>
        <fullName evidence="1">Probable protein kinase UbiB</fullName>
        <ecNumber evidence="1">2.7.-.-</ecNumber>
    </recommendedName>
    <alternativeName>
        <fullName evidence="1">Ubiquinone biosynthesis protein UbiB</fullName>
    </alternativeName>
</protein>